<evidence type="ECO:0000255" key="1">
    <source>
        <dbReference type="HAMAP-Rule" id="MF_01541"/>
    </source>
</evidence>
<evidence type="ECO:0000256" key="2">
    <source>
        <dbReference type="SAM" id="MobiDB-lite"/>
    </source>
</evidence>
<protein>
    <recommendedName>
        <fullName evidence="1">Sulfite reductase [NADPH] flavoprotein alpha-component</fullName>
        <shortName evidence="1">SiR-FP</shortName>
        <ecNumber evidence="1">1.8.1.2</ecNumber>
    </recommendedName>
</protein>
<accession>Q87L90</accession>
<proteinExistence type="inferred from homology"/>
<comment type="function">
    <text evidence="1">Component of the sulfite reductase complex that catalyzes the 6-electron reduction of sulfite to sulfide. This is one of several activities required for the biosynthesis of L-cysteine from sulfate. The flavoprotein component catalyzes the electron flow from NADPH -&gt; FAD -&gt; FMN to the hemoprotein component.</text>
</comment>
<comment type="catalytic activity">
    <reaction evidence="1">
        <text>hydrogen sulfide + 3 NADP(+) + 3 H2O = sulfite + 3 NADPH + 4 H(+)</text>
        <dbReference type="Rhea" id="RHEA:13801"/>
        <dbReference type="ChEBI" id="CHEBI:15377"/>
        <dbReference type="ChEBI" id="CHEBI:15378"/>
        <dbReference type="ChEBI" id="CHEBI:17359"/>
        <dbReference type="ChEBI" id="CHEBI:29919"/>
        <dbReference type="ChEBI" id="CHEBI:57783"/>
        <dbReference type="ChEBI" id="CHEBI:58349"/>
        <dbReference type="EC" id="1.8.1.2"/>
    </reaction>
</comment>
<comment type="cofactor">
    <cofactor evidence="1">
        <name>FAD</name>
        <dbReference type="ChEBI" id="CHEBI:57692"/>
    </cofactor>
    <text evidence="1">Binds 1 FAD per subunit.</text>
</comment>
<comment type="cofactor">
    <cofactor evidence="1">
        <name>FMN</name>
        <dbReference type="ChEBI" id="CHEBI:58210"/>
    </cofactor>
    <text evidence="1">Binds 1 FMN per subunit.</text>
</comment>
<comment type="pathway">
    <text evidence="1">Sulfur metabolism; hydrogen sulfide biosynthesis; hydrogen sulfide from sulfite (NADPH route): step 1/1.</text>
</comment>
<comment type="subunit">
    <text evidence="1">Alpha(8)-beta(8). The alpha component is a flavoprotein, the beta component is a hemoprotein.</text>
</comment>
<comment type="similarity">
    <text evidence="1">Belongs to the NADPH-dependent sulphite reductase flavoprotein subunit CysJ family.</text>
</comment>
<comment type="similarity">
    <text evidence="1">In the N-terminal section; belongs to the flavodoxin family.</text>
</comment>
<comment type="similarity">
    <text evidence="1">In the C-terminal section; belongs to the flavoprotein pyridine nucleotide cytochrome reductase family.</text>
</comment>
<feature type="chain" id="PRO_0000199941" description="Sulfite reductase [NADPH] flavoprotein alpha-component">
    <location>
        <begin position="1"/>
        <end position="623"/>
    </location>
</feature>
<feature type="domain" description="Flavodoxin-like" evidence="1">
    <location>
        <begin position="87"/>
        <end position="225"/>
    </location>
</feature>
<feature type="domain" description="FAD-binding FR-type" evidence="1">
    <location>
        <begin position="258"/>
        <end position="472"/>
    </location>
</feature>
<feature type="region of interest" description="Disordered" evidence="2">
    <location>
        <begin position="1"/>
        <end position="32"/>
    </location>
</feature>
<feature type="binding site" evidence="1">
    <location>
        <begin position="93"/>
        <end position="98"/>
    </location>
    <ligand>
        <name>FMN</name>
        <dbReference type="ChEBI" id="CHEBI:58210"/>
    </ligand>
</feature>
<feature type="binding site" evidence="1">
    <location>
        <begin position="140"/>
        <end position="143"/>
    </location>
    <ligand>
        <name>FMN</name>
        <dbReference type="ChEBI" id="CHEBI:58210"/>
    </ligand>
</feature>
<feature type="binding site" evidence="1">
    <location>
        <begin position="176"/>
        <end position="185"/>
    </location>
    <ligand>
        <name>FMN</name>
        <dbReference type="ChEBI" id="CHEBI:58210"/>
    </ligand>
</feature>
<feature type="binding site" evidence="1">
    <location>
        <position position="346"/>
    </location>
    <ligand>
        <name>FAD</name>
        <dbReference type="ChEBI" id="CHEBI:57692"/>
    </ligand>
</feature>
<feature type="binding site" evidence="1">
    <location>
        <position position="380"/>
    </location>
    <ligand>
        <name>FAD</name>
        <dbReference type="ChEBI" id="CHEBI:57692"/>
    </ligand>
</feature>
<feature type="binding site" evidence="1">
    <location>
        <begin position="410"/>
        <end position="413"/>
    </location>
    <ligand>
        <name>FAD</name>
        <dbReference type="ChEBI" id="CHEBI:57692"/>
    </ligand>
</feature>
<feature type="binding site" evidence="1">
    <location>
        <begin position="428"/>
        <end position="430"/>
    </location>
    <ligand>
        <name>FAD</name>
        <dbReference type="ChEBI" id="CHEBI:57692"/>
    </ligand>
</feature>
<feature type="binding site" evidence="1">
    <location>
        <position position="434"/>
    </location>
    <ligand>
        <name>FAD</name>
        <dbReference type="ChEBI" id="CHEBI:57692"/>
    </ligand>
</feature>
<feature type="binding site" evidence="1">
    <location>
        <begin position="443"/>
        <end position="446"/>
    </location>
    <ligand>
        <name>FAD</name>
        <dbReference type="ChEBI" id="CHEBI:57692"/>
    </ligand>
</feature>
<feature type="binding site" evidence="1">
    <location>
        <begin position="543"/>
        <end position="544"/>
    </location>
    <ligand>
        <name>NADP(+)</name>
        <dbReference type="ChEBI" id="CHEBI:58349"/>
    </ligand>
</feature>
<feature type="binding site" evidence="1">
    <location>
        <begin position="549"/>
        <end position="553"/>
    </location>
    <ligand>
        <name>NADP(+)</name>
        <dbReference type="ChEBI" id="CHEBI:58349"/>
    </ligand>
</feature>
<feature type="binding site" evidence="1">
    <location>
        <position position="585"/>
    </location>
    <ligand>
        <name>NADP(+)</name>
        <dbReference type="ChEBI" id="CHEBI:58349"/>
    </ligand>
</feature>
<feature type="binding site" evidence="1">
    <location>
        <position position="623"/>
    </location>
    <ligand>
        <name>FAD</name>
        <dbReference type="ChEBI" id="CHEBI:57692"/>
    </ligand>
</feature>
<gene>
    <name evidence="1" type="primary">cysJ</name>
    <name type="ordered locus">VP2722</name>
</gene>
<keyword id="KW-0028">Amino-acid biosynthesis</keyword>
<keyword id="KW-0198">Cysteine biosynthesis</keyword>
<keyword id="KW-0249">Electron transport</keyword>
<keyword id="KW-0274">FAD</keyword>
<keyword id="KW-0285">Flavoprotein</keyword>
<keyword id="KW-0288">FMN</keyword>
<keyword id="KW-0521">NADP</keyword>
<keyword id="KW-0560">Oxidoreductase</keyword>
<keyword id="KW-0813">Transport</keyword>
<reference key="1">
    <citation type="journal article" date="2003" name="Lancet">
        <title>Genome sequence of Vibrio parahaemolyticus: a pathogenic mechanism distinct from that of V. cholerae.</title>
        <authorList>
            <person name="Makino K."/>
            <person name="Oshima K."/>
            <person name="Kurokawa K."/>
            <person name="Yokoyama K."/>
            <person name="Uda T."/>
            <person name="Tagomori K."/>
            <person name="Iijima Y."/>
            <person name="Najima M."/>
            <person name="Nakano M."/>
            <person name="Yamashita A."/>
            <person name="Kubota Y."/>
            <person name="Kimura S."/>
            <person name="Yasunaga T."/>
            <person name="Honda T."/>
            <person name="Shinagawa H."/>
            <person name="Hattori M."/>
            <person name="Iida T."/>
        </authorList>
    </citation>
    <scope>NUCLEOTIDE SEQUENCE [LARGE SCALE GENOMIC DNA]</scope>
    <source>
        <strain>RIMD 2210633</strain>
    </source>
</reference>
<organism>
    <name type="scientific">Vibrio parahaemolyticus serotype O3:K6 (strain RIMD 2210633)</name>
    <dbReference type="NCBI Taxonomy" id="223926"/>
    <lineage>
        <taxon>Bacteria</taxon>
        <taxon>Pseudomonadati</taxon>
        <taxon>Pseudomonadota</taxon>
        <taxon>Gammaproteobacteria</taxon>
        <taxon>Vibrionales</taxon>
        <taxon>Vibrionaceae</taxon>
        <taxon>Vibrio</taxon>
    </lineage>
</organism>
<dbReference type="EC" id="1.8.1.2" evidence="1"/>
<dbReference type="EMBL" id="BA000031">
    <property type="protein sequence ID" value="BAC60985.1"/>
    <property type="molecule type" value="Genomic_DNA"/>
</dbReference>
<dbReference type="RefSeq" id="NP_799101.1">
    <property type="nucleotide sequence ID" value="NC_004603.1"/>
</dbReference>
<dbReference type="RefSeq" id="WP_005477367.1">
    <property type="nucleotide sequence ID" value="NC_004603.1"/>
</dbReference>
<dbReference type="SMR" id="Q87L90"/>
<dbReference type="GeneID" id="1190272"/>
<dbReference type="KEGG" id="vpa:VP2722"/>
<dbReference type="PATRIC" id="fig|223926.6.peg.2620"/>
<dbReference type="eggNOG" id="COG0369">
    <property type="taxonomic scope" value="Bacteria"/>
</dbReference>
<dbReference type="HOGENOM" id="CLU_001570_17_7_6"/>
<dbReference type="UniPathway" id="UPA00140">
    <property type="reaction ID" value="UER00207"/>
</dbReference>
<dbReference type="Proteomes" id="UP000002493">
    <property type="component" value="Chromosome 1"/>
</dbReference>
<dbReference type="GO" id="GO:0005829">
    <property type="term" value="C:cytosol"/>
    <property type="evidence" value="ECO:0007669"/>
    <property type="project" value="TreeGrafter"/>
</dbReference>
<dbReference type="GO" id="GO:0050660">
    <property type="term" value="F:flavin adenine dinucleotide binding"/>
    <property type="evidence" value="ECO:0007669"/>
    <property type="project" value="InterPro"/>
</dbReference>
<dbReference type="GO" id="GO:0010181">
    <property type="term" value="F:FMN binding"/>
    <property type="evidence" value="ECO:0007669"/>
    <property type="project" value="InterPro"/>
</dbReference>
<dbReference type="GO" id="GO:0004783">
    <property type="term" value="F:sulfite reductase (NADPH) activity"/>
    <property type="evidence" value="ECO:0007669"/>
    <property type="project" value="UniProtKB-UniRule"/>
</dbReference>
<dbReference type="GO" id="GO:0019344">
    <property type="term" value="P:cysteine biosynthetic process"/>
    <property type="evidence" value="ECO:0007669"/>
    <property type="project" value="UniProtKB-KW"/>
</dbReference>
<dbReference type="GO" id="GO:0070814">
    <property type="term" value="P:hydrogen sulfide biosynthetic process"/>
    <property type="evidence" value="ECO:0007669"/>
    <property type="project" value="UniProtKB-UniRule"/>
</dbReference>
<dbReference type="GO" id="GO:0000103">
    <property type="term" value="P:sulfate assimilation"/>
    <property type="evidence" value="ECO:0007669"/>
    <property type="project" value="UniProtKB-UniRule"/>
</dbReference>
<dbReference type="CDD" id="cd06199">
    <property type="entry name" value="SiR"/>
    <property type="match status" value="1"/>
</dbReference>
<dbReference type="FunFam" id="3.40.50.80:FF:000001">
    <property type="entry name" value="NADPH--cytochrome P450 reductase 1"/>
    <property type="match status" value="1"/>
</dbReference>
<dbReference type="Gene3D" id="3.40.50.360">
    <property type="match status" value="1"/>
</dbReference>
<dbReference type="Gene3D" id="1.20.990.10">
    <property type="entry name" value="NADPH-cytochrome p450 Reductase, Chain A, domain 3"/>
    <property type="match status" value="1"/>
</dbReference>
<dbReference type="Gene3D" id="3.40.50.80">
    <property type="entry name" value="Nucleotide-binding domain of ferredoxin-NADP reductase (FNR) module"/>
    <property type="match status" value="1"/>
</dbReference>
<dbReference type="Gene3D" id="2.40.30.10">
    <property type="entry name" value="Translation factors"/>
    <property type="match status" value="1"/>
</dbReference>
<dbReference type="HAMAP" id="MF_01541">
    <property type="entry name" value="CysJ"/>
    <property type="match status" value="1"/>
</dbReference>
<dbReference type="InterPro" id="IPR010199">
    <property type="entry name" value="CysJ"/>
</dbReference>
<dbReference type="InterPro" id="IPR003097">
    <property type="entry name" value="CysJ-like_FAD-binding"/>
</dbReference>
<dbReference type="InterPro" id="IPR029758">
    <property type="entry name" value="CysJ_Proteobact"/>
</dbReference>
<dbReference type="InterPro" id="IPR017927">
    <property type="entry name" value="FAD-bd_FR_type"/>
</dbReference>
<dbReference type="InterPro" id="IPR001094">
    <property type="entry name" value="Flavdoxin-like"/>
</dbReference>
<dbReference type="InterPro" id="IPR008254">
    <property type="entry name" value="Flavodoxin/NO_synth"/>
</dbReference>
<dbReference type="InterPro" id="IPR001709">
    <property type="entry name" value="Flavoprot_Pyr_Nucl_cyt_Rdtase"/>
</dbReference>
<dbReference type="InterPro" id="IPR029039">
    <property type="entry name" value="Flavoprotein-like_sf"/>
</dbReference>
<dbReference type="InterPro" id="IPR039261">
    <property type="entry name" value="FNR_nucleotide-bd"/>
</dbReference>
<dbReference type="InterPro" id="IPR023173">
    <property type="entry name" value="NADPH_Cyt_P450_Rdtase_alpha"/>
</dbReference>
<dbReference type="InterPro" id="IPR001433">
    <property type="entry name" value="OxRdtase_FAD/NAD-bd"/>
</dbReference>
<dbReference type="InterPro" id="IPR017938">
    <property type="entry name" value="Riboflavin_synthase-like_b-brl"/>
</dbReference>
<dbReference type="NCBIfam" id="TIGR01931">
    <property type="entry name" value="cysJ"/>
    <property type="match status" value="1"/>
</dbReference>
<dbReference type="PANTHER" id="PTHR19384:SF128">
    <property type="entry name" value="NADPH OXIDOREDUCTASE A"/>
    <property type="match status" value="1"/>
</dbReference>
<dbReference type="PANTHER" id="PTHR19384">
    <property type="entry name" value="NITRIC OXIDE SYNTHASE-RELATED"/>
    <property type="match status" value="1"/>
</dbReference>
<dbReference type="Pfam" id="PF00667">
    <property type="entry name" value="FAD_binding_1"/>
    <property type="match status" value="1"/>
</dbReference>
<dbReference type="Pfam" id="PF00258">
    <property type="entry name" value="Flavodoxin_1"/>
    <property type="match status" value="1"/>
</dbReference>
<dbReference type="Pfam" id="PF00175">
    <property type="entry name" value="NAD_binding_1"/>
    <property type="match status" value="1"/>
</dbReference>
<dbReference type="PIRSF" id="PIRSF000207">
    <property type="entry name" value="SiR-FP_CysJ"/>
    <property type="match status" value="1"/>
</dbReference>
<dbReference type="PRINTS" id="PR00369">
    <property type="entry name" value="FLAVODOXIN"/>
</dbReference>
<dbReference type="PRINTS" id="PR00371">
    <property type="entry name" value="FPNCR"/>
</dbReference>
<dbReference type="SUPFAM" id="SSF52343">
    <property type="entry name" value="Ferredoxin reductase-like, C-terminal NADP-linked domain"/>
    <property type="match status" value="1"/>
</dbReference>
<dbReference type="SUPFAM" id="SSF52218">
    <property type="entry name" value="Flavoproteins"/>
    <property type="match status" value="1"/>
</dbReference>
<dbReference type="SUPFAM" id="SSF63380">
    <property type="entry name" value="Riboflavin synthase domain-like"/>
    <property type="match status" value="1"/>
</dbReference>
<dbReference type="PROSITE" id="PS51384">
    <property type="entry name" value="FAD_FR"/>
    <property type="match status" value="1"/>
</dbReference>
<dbReference type="PROSITE" id="PS50902">
    <property type="entry name" value="FLAVODOXIN_LIKE"/>
    <property type="match status" value="1"/>
</dbReference>
<name>CYSJ_VIBPA</name>
<sequence length="623" mass="68756">MSFQKNEYSHKNVSEDNNGQGGNPPIASPLNDQQFNSLQQTVSELSSQQLAWVSGYFWGLAQHQPSAAATPIAQAAAAVSAKPAGKLTIIFASQTGNAKGVAEALEQEAKAEGIAVELFDASDYKGKNLAKETHVIIVASTNGEGEAPDNAIELHEFLQSKKAPKLSNLQYGVIALGDSSYEFFCQTGKDFDTYLAKLGATSFIERIDCDVDYEAAAEEWRKNALGKVKETLSSGNEAEIVQLPVGQAAASHSQYNKQNPYTATLLTSQKITGRDSGKDVRHIEIDLDGSGLTYQPGDALGVWYENSSELASDILGKVGLSGVETVDVDGESLSIHSALVSKFEITTSNPQLVAKFAELSGSKKLQKLAEDKDKLREYSANTQIVDVFAEKKTKLTADELVGLLRRLTPRLYSIASSQAEVDEEVHLTVGLVEYDHNDEKRYGGASSFLAQRLEEGGDVKVFVEHNNNFKLPEDDTTPIIMVGPGTGIAPFRSFIQERENRDAEGKNWLFFGDRTFTQDFLYQVEWQKYLKSGVLSRLDVAFSRDQVEKVYVQHRILENAAQVWQWIQDGAYIYVCGDATRMAKDVHDALVIVAEQEGKMPRDDAEQFINDLRKAKRYQRDVY</sequence>